<comment type="function">
    <text evidence="1">Cell wall formation. Catalyzes the transfer of a GlcNAc subunit on undecaprenyl-pyrophosphoryl-MurNAc-pentapeptide (lipid intermediate I) to form undecaprenyl-pyrophosphoryl-MurNAc-(pentapeptide)GlcNAc (lipid intermediate II).</text>
</comment>
<comment type="catalytic activity">
    <reaction evidence="1">
        <text>di-trans,octa-cis-undecaprenyl diphospho-N-acetyl-alpha-D-muramoyl-L-alanyl-D-glutamyl-meso-2,6-diaminopimeloyl-D-alanyl-D-alanine + UDP-N-acetyl-alpha-D-glucosamine = di-trans,octa-cis-undecaprenyl diphospho-[N-acetyl-alpha-D-glucosaminyl-(1-&gt;4)]-N-acetyl-alpha-D-muramoyl-L-alanyl-D-glutamyl-meso-2,6-diaminopimeloyl-D-alanyl-D-alanine + UDP + H(+)</text>
        <dbReference type="Rhea" id="RHEA:31227"/>
        <dbReference type="ChEBI" id="CHEBI:15378"/>
        <dbReference type="ChEBI" id="CHEBI:57705"/>
        <dbReference type="ChEBI" id="CHEBI:58223"/>
        <dbReference type="ChEBI" id="CHEBI:61387"/>
        <dbReference type="ChEBI" id="CHEBI:61388"/>
        <dbReference type="EC" id="2.4.1.227"/>
    </reaction>
</comment>
<comment type="pathway">
    <text evidence="1">Cell wall biogenesis; peptidoglycan biosynthesis.</text>
</comment>
<comment type="subcellular location">
    <subcellularLocation>
        <location evidence="1">Cell inner membrane</location>
        <topology evidence="1">Peripheral membrane protein</topology>
        <orientation evidence="1">Cytoplasmic side</orientation>
    </subcellularLocation>
</comment>
<comment type="similarity">
    <text evidence="1">Belongs to the glycosyltransferase 28 family. MurG subfamily.</text>
</comment>
<dbReference type="EC" id="2.4.1.227" evidence="1"/>
<dbReference type="EMBL" id="CP001158">
    <property type="protein sequence ID" value="ACL30034.1"/>
    <property type="molecule type" value="Genomic_DNA"/>
</dbReference>
<dbReference type="RefSeq" id="WP_010896008.1">
    <property type="nucleotide sequence ID" value="NC_011834.1"/>
</dbReference>
<dbReference type="SMR" id="B8D7B9"/>
<dbReference type="CAZy" id="GT28">
    <property type="family name" value="Glycosyltransferase Family 28"/>
</dbReference>
<dbReference type="KEGG" id="bau:BUAPTUC7_214"/>
<dbReference type="HOGENOM" id="CLU_037404_2_0_6"/>
<dbReference type="UniPathway" id="UPA00219"/>
<dbReference type="GO" id="GO:0005886">
    <property type="term" value="C:plasma membrane"/>
    <property type="evidence" value="ECO:0007669"/>
    <property type="project" value="UniProtKB-SubCell"/>
</dbReference>
<dbReference type="GO" id="GO:0051991">
    <property type="term" value="F:UDP-N-acetyl-D-glucosamine:N-acetylmuramoyl-L-alanyl-D-glutamyl-meso-2,6-diaminopimelyl-D-alanyl-D-alanine-diphosphoundecaprenol 4-beta-N-acetylglucosaminlytransferase activity"/>
    <property type="evidence" value="ECO:0007669"/>
    <property type="project" value="RHEA"/>
</dbReference>
<dbReference type="GO" id="GO:0050511">
    <property type="term" value="F:undecaprenyldiphospho-muramoylpentapeptide beta-N-acetylglucosaminyltransferase activity"/>
    <property type="evidence" value="ECO:0007669"/>
    <property type="project" value="UniProtKB-UniRule"/>
</dbReference>
<dbReference type="GO" id="GO:0005975">
    <property type="term" value="P:carbohydrate metabolic process"/>
    <property type="evidence" value="ECO:0007669"/>
    <property type="project" value="InterPro"/>
</dbReference>
<dbReference type="GO" id="GO:0051301">
    <property type="term" value="P:cell division"/>
    <property type="evidence" value="ECO:0007669"/>
    <property type="project" value="UniProtKB-KW"/>
</dbReference>
<dbReference type="GO" id="GO:0071555">
    <property type="term" value="P:cell wall organization"/>
    <property type="evidence" value="ECO:0007669"/>
    <property type="project" value="UniProtKB-KW"/>
</dbReference>
<dbReference type="GO" id="GO:0030259">
    <property type="term" value="P:lipid glycosylation"/>
    <property type="evidence" value="ECO:0007669"/>
    <property type="project" value="UniProtKB-UniRule"/>
</dbReference>
<dbReference type="GO" id="GO:0009252">
    <property type="term" value="P:peptidoglycan biosynthetic process"/>
    <property type="evidence" value="ECO:0007669"/>
    <property type="project" value="UniProtKB-UniRule"/>
</dbReference>
<dbReference type="GO" id="GO:0008360">
    <property type="term" value="P:regulation of cell shape"/>
    <property type="evidence" value="ECO:0007669"/>
    <property type="project" value="UniProtKB-KW"/>
</dbReference>
<dbReference type="CDD" id="cd03785">
    <property type="entry name" value="GT28_MurG"/>
    <property type="match status" value="1"/>
</dbReference>
<dbReference type="Gene3D" id="3.40.50.2000">
    <property type="entry name" value="Glycogen Phosphorylase B"/>
    <property type="match status" value="2"/>
</dbReference>
<dbReference type="HAMAP" id="MF_00033">
    <property type="entry name" value="MurG"/>
    <property type="match status" value="1"/>
</dbReference>
<dbReference type="InterPro" id="IPR006009">
    <property type="entry name" value="GlcNAc_MurG"/>
</dbReference>
<dbReference type="InterPro" id="IPR007235">
    <property type="entry name" value="Glyco_trans_28_C"/>
</dbReference>
<dbReference type="InterPro" id="IPR004276">
    <property type="entry name" value="GlycoTrans_28_N"/>
</dbReference>
<dbReference type="NCBIfam" id="TIGR01133">
    <property type="entry name" value="murG"/>
    <property type="match status" value="1"/>
</dbReference>
<dbReference type="PANTHER" id="PTHR21015:SF22">
    <property type="entry name" value="GLYCOSYLTRANSFERASE"/>
    <property type="match status" value="1"/>
</dbReference>
<dbReference type="PANTHER" id="PTHR21015">
    <property type="entry name" value="UDP-N-ACETYLGLUCOSAMINE--N-ACETYLMURAMYL-(PENTAPEPTIDE) PYROPHOSPHORYL-UNDECAPRENOL N-ACETYLGLUCOSAMINE TRANSFERASE 1"/>
    <property type="match status" value="1"/>
</dbReference>
<dbReference type="Pfam" id="PF04101">
    <property type="entry name" value="Glyco_tran_28_C"/>
    <property type="match status" value="1"/>
</dbReference>
<dbReference type="Pfam" id="PF03033">
    <property type="entry name" value="Glyco_transf_28"/>
    <property type="match status" value="1"/>
</dbReference>
<dbReference type="SUPFAM" id="SSF53756">
    <property type="entry name" value="UDP-Glycosyltransferase/glycogen phosphorylase"/>
    <property type="match status" value="1"/>
</dbReference>
<sequence length="354" mass="39500">MIPKKIIIMAGGSGGHVFPGLTIARYLIEKGWLVNWIGTKNSIESRIIPKYGIKIHYISIKGLRNTSLKNLIISPIYILRAYYAVKKIIKTWSPDIVLGMGGYVSGPGGVASWNCNIPLLLHEQNKIAGITNKWLSRISTKNMQASPGVLRNAEVVGNPVCQSIIKVPNPINRFKNRTGLLRVLVIGGSQGSSILNRILPEVSFLLKEKIIFWHQTGNYELEKTKKKYNKLRLNQNLITSFIKNIASAYEWADLIICRSGALTVSEISIVGLGAIFIPYPHKDKQQHRNAEDLELIGAAKIIDQSNLNTKLIVNILNSLDRDKLFIMAKKAHSLGVRDAIFNIFNVINKISKKT</sequence>
<protein>
    <recommendedName>
        <fullName evidence="1">UDP-N-acetylglucosamine--N-acetylmuramyl-(pentapeptide) pyrophosphoryl-undecaprenol N-acetylglucosamine transferase</fullName>
        <ecNumber evidence="1">2.4.1.227</ecNumber>
    </recommendedName>
    <alternativeName>
        <fullName evidence="1">Undecaprenyl-PP-MurNAc-pentapeptide-UDPGlcNAc GlcNAc transferase</fullName>
    </alternativeName>
</protein>
<feature type="chain" id="PRO_1000117006" description="UDP-N-acetylglucosamine--N-acetylmuramyl-(pentapeptide) pyrophosphoryl-undecaprenol N-acetylglucosamine transferase">
    <location>
        <begin position="1"/>
        <end position="354"/>
    </location>
</feature>
<feature type="binding site" evidence="1">
    <location>
        <begin position="13"/>
        <end position="15"/>
    </location>
    <ligand>
        <name>UDP-N-acetyl-alpha-D-glucosamine</name>
        <dbReference type="ChEBI" id="CHEBI:57705"/>
    </ligand>
</feature>
<feature type="binding site" evidence="1">
    <location>
        <position position="125"/>
    </location>
    <ligand>
        <name>UDP-N-acetyl-alpha-D-glucosamine</name>
        <dbReference type="ChEBI" id="CHEBI:57705"/>
    </ligand>
</feature>
<feature type="binding site" evidence="1">
    <location>
        <position position="189"/>
    </location>
    <ligand>
        <name>UDP-N-acetyl-alpha-D-glucosamine</name>
        <dbReference type="ChEBI" id="CHEBI:57705"/>
    </ligand>
</feature>
<feature type="binding site" evidence="1">
    <location>
        <position position="242"/>
    </location>
    <ligand>
        <name>UDP-N-acetyl-alpha-D-glucosamine</name>
        <dbReference type="ChEBI" id="CHEBI:57705"/>
    </ligand>
</feature>
<feature type="binding site" evidence="1">
    <location>
        <begin position="261"/>
        <end position="266"/>
    </location>
    <ligand>
        <name>UDP-N-acetyl-alpha-D-glucosamine</name>
        <dbReference type="ChEBI" id="CHEBI:57705"/>
    </ligand>
</feature>
<feature type="binding site" evidence="1">
    <location>
        <position position="286"/>
    </location>
    <ligand>
        <name>UDP-N-acetyl-alpha-D-glucosamine</name>
        <dbReference type="ChEBI" id="CHEBI:57705"/>
    </ligand>
</feature>
<accession>B8D7B9</accession>
<name>MURG_BUCAT</name>
<reference key="1">
    <citation type="journal article" date="2009" name="Science">
        <title>The dynamics and time scale of ongoing genomic erosion in symbiotic bacteria.</title>
        <authorList>
            <person name="Moran N.A."/>
            <person name="McLaughlin H.J."/>
            <person name="Sorek R."/>
        </authorList>
    </citation>
    <scope>NUCLEOTIDE SEQUENCE [LARGE SCALE GENOMIC DNA]</scope>
    <source>
        <strain>Tuc7</strain>
    </source>
</reference>
<keyword id="KW-0131">Cell cycle</keyword>
<keyword id="KW-0132">Cell division</keyword>
<keyword id="KW-0997">Cell inner membrane</keyword>
<keyword id="KW-1003">Cell membrane</keyword>
<keyword id="KW-0133">Cell shape</keyword>
<keyword id="KW-0961">Cell wall biogenesis/degradation</keyword>
<keyword id="KW-0328">Glycosyltransferase</keyword>
<keyword id="KW-0472">Membrane</keyword>
<keyword id="KW-0573">Peptidoglycan synthesis</keyword>
<keyword id="KW-0808">Transferase</keyword>
<evidence type="ECO:0000255" key="1">
    <source>
        <dbReference type="HAMAP-Rule" id="MF_00033"/>
    </source>
</evidence>
<proteinExistence type="inferred from homology"/>
<gene>
    <name evidence="1" type="primary">murG</name>
    <name type="ordered locus">BUAPTUC7_214</name>
</gene>
<organism>
    <name type="scientific">Buchnera aphidicola subsp. Acyrthosiphon pisum (strain Tuc7)</name>
    <dbReference type="NCBI Taxonomy" id="561501"/>
    <lineage>
        <taxon>Bacteria</taxon>
        <taxon>Pseudomonadati</taxon>
        <taxon>Pseudomonadota</taxon>
        <taxon>Gammaproteobacteria</taxon>
        <taxon>Enterobacterales</taxon>
        <taxon>Erwiniaceae</taxon>
        <taxon>Buchnera</taxon>
    </lineage>
</organism>